<protein>
    <recommendedName>
        <fullName>Serine/threonine-protein kinase PLK3</fullName>
        <ecNumber>2.7.11.21</ecNumber>
    </recommendedName>
    <alternativeName>
        <fullName>Cytokine-inducible serine/threonine-protein kinase</fullName>
    </alternativeName>
    <alternativeName>
        <fullName>FGF-inducible kinase</fullName>
    </alternativeName>
    <alternativeName>
        <fullName>Polo-like kinase 3</fullName>
        <shortName>PLK-3</shortName>
    </alternativeName>
</protein>
<dbReference type="EC" id="2.7.11.21"/>
<dbReference type="EMBL" id="AF136584">
    <property type="protein sequence ID" value="AAF08367.1"/>
    <property type="molecule type" value="mRNA"/>
</dbReference>
<dbReference type="RefSeq" id="NP_071523.1">
    <property type="nucleotide sequence ID" value="NM_022187.1"/>
</dbReference>
<dbReference type="SMR" id="Q9R011"/>
<dbReference type="BioGRID" id="248673">
    <property type="interactions" value="1"/>
</dbReference>
<dbReference type="FunCoup" id="Q9R011">
    <property type="interactions" value="147"/>
</dbReference>
<dbReference type="STRING" id="10116.ENSRNOP00000025197"/>
<dbReference type="PhosphoSitePlus" id="Q9R011"/>
<dbReference type="PaxDb" id="10116-ENSRNOP00000025197"/>
<dbReference type="Ensembl" id="ENSRNOT00000025197.6">
    <property type="protein sequence ID" value="ENSRNOP00000025197.4"/>
    <property type="gene ID" value="ENSRNOG00000018484.6"/>
</dbReference>
<dbReference type="GeneID" id="58936"/>
<dbReference type="KEGG" id="rno:58936"/>
<dbReference type="UCSC" id="RGD:62039">
    <property type="organism name" value="rat"/>
</dbReference>
<dbReference type="AGR" id="RGD:62039"/>
<dbReference type="CTD" id="1263"/>
<dbReference type="RGD" id="62039">
    <property type="gene designation" value="Plk3"/>
</dbReference>
<dbReference type="eggNOG" id="KOG0575">
    <property type="taxonomic scope" value="Eukaryota"/>
</dbReference>
<dbReference type="GeneTree" id="ENSGT00940000159121"/>
<dbReference type="HOGENOM" id="CLU_000288_46_1_1"/>
<dbReference type="InParanoid" id="Q9R011"/>
<dbReference type="OMA" id="FEECVTA"/>
<dbReference type="OrthoDB" id="31716at9989"/>
<dbReference type="TreeFam" id="TF101089"/>
<dbReference type="Reactome" id="R-RNO-6804115">
    <property type="pathway name" value="TP53 regulates transcription of additional cell cycle genes whose exact role in the p53 pathway remain uncertain"/>
</dbReference>
<dbReference type="Reactome" id="R-RNO-6804756">
    <property type="pathway name" value="Regulation of TP53 Activity through Phosphorylation"/>
</dbReference>
<dbReference type="PRO" id="PR:Q9R011"/>
<dbReference type="Proteomes" id="UP000002494">
    <property type="component" value="Chromosome 5"/>
</dbReference>
<dbReference type="Bgee" id="ENSRNOG00000018484">
    <property type="expression patterns" value="Expressed in esophagus and 19 other cell types or tissues"/>
</dbReference>
<dbReference type="GO" id="GO:0005813">
    <property type="term" value="C:centrosome"/>
    <property type="evidence" value="ECO:0000250"/>
    <property type="project" value="UniProtKB"/>
</dbReference>
<dbReference type="GO" id="GO:0000785">
    <property type="term" value="C:chromatin"/>
    <property type="evidence" value="ECO:0000266"/>
    <property type="project" value="RGD"/>
</dbReference>
<dbReference type="GO" id="GO:0005737">
    <property type="term" value="C:cytoplasm"/>
    <property type="evidence" value="ECO:0000250"/>
    <property type="project" value="UniProtKB"/>
</dbReference>
<dbReference type="GO" id="GO:0030425">
    <property type="term" value="C:dendrite"/>
    <property type="evidence" value="ECO:0000314"/>
    <property type="project" value="RGD"/>
</dbReference>
<dbReference type="GO" id="GO:0005795">
    <property type="term" value="C:Golgi stack"/>
    <property type="evidence" value="ECO:0000250"/>
    <property type="project" value="UniProtKB"/>
</dbReference>
<dbReference type="GO" id="GO:0000776">
    <property type="term" value="C:kinetochore"/>
    <property type="evidence" value="ECO:0000318"/>
    <property type="project" value="GO_Central"/>
</dbReference>
<dbReference type="GO" id="GO:0043025">
    <property type="term" value="C:neuronal cell body"/>
    <property type="evidence" value="ECO:0000314"/>
    <property type="project" value="RGD"/>
</dbReference>
<dbReference type="GO" id="GO:0005730">
    <property type="term" value="C:nucleolus"/>
    <property type="evidence" value="ECO:0000250"/>
    <property type="project" value="UniProtKB"/>
</dbReference>
<dbReference type="GO" id="GO:0005634">
    <property type="term" value="C:nucleus"/>
    <property type="evidence" value="ECO:0000250"/>
    <property type="project" value="UniProtKB"/>
</dbReference>
<dbReference type="GO" id="GO:0000922">
    <property type="term" value="C:spindle pole"/>
    <property type="evidence" value="ECO:0000318"/>
    <property type="project" value="GO_Central"/>
</dbReference>
<dbReference type="GO" id="GO:0005524">
    <property type="term" value="F:ATP binding"/>
    <property type="evidence" value="ECO:0007669"/>
    <property type="project" value="UniProtKB-KW"/>
</dbReference>
<dbReference type="GO" id="GO:0002039">
    <property type="term" value="F:p53 binding"/>
    <property type="evidence" value="ECO:0000250"/>
    <property type="project" value="UniProtKB"/>
</dbReference>
<dbReference type="GO" id="GO:0004672">
    <property type="term" value="F:protein kinase activity"/>
    <property type="evidence" value="ECO:0000304"/>
    <property type="project" value="RGD"/>
</dbReference>
<dbReference type="GO" id="GO:0106310">
    <property type="term" value="F:protein serine kinase activity"/>
    <property type="evidence" value="ECO:0007669"/>
    <property type="project" value="RHEA"/>
</dbReference>
<dbReference type="GO" id="GO:0004674">
    <property type="term" value="F:protein serine/threonine kinase activity"/>
    <property type="evidence" value="ECO:0000250"/>
    <property type="project" value="UniProtKB"/>
</dbReference>
<dbReference type="GO" id="GO:0006915">
    <property type="term" value="P:apoptotic process"/>
    <property type="evidence" value="ECO:0007669"/>
    <property type="project" value="UniProtKB-KW"/>
</dbReference>
<dbReference type="GO" id="GO:0031122">
    <property type="term" value="P:cytoplasmic microtubule organization"/>
    <property type="evidence" value="ECO:0000250"/>
    <property type="project" value="UniProtKB"/>
</dbReference>
<dbReference type="GO" id="GO:0006974">
    <property type="term" value="P:DNA damage response"/>
    <property type="evidence" value="ECO:0000250"/>
    <property type="project" value="UniProtKB"/>
</dbReference>
<dbReference type="GO" id="GO:0000082">
    <property type="term" value="P:G1/S transition of mitotic cell cycle"/>
    <property type="evidence" value="ECO:0000250"/>
    <property type="project" value="UniProtKB"/>
</dbReference>
<dbReference type="GO" id="GO:0090166">
    <property type="term" value="P:Golgi disassembly"/>
    <property type="evidence" value="ECO:0000250"/>
    <property type="project" value="UniProtKB"/>
</dbReference>
<dbReference type="GO" id="GO:0044819">
    <property type="term" value="P:mitotic G1/S transition checkpoint signaling"/>
    <property type="evidence" value="ECO:0000250"/>
    <property type="project" value="UniProtKB"/>
</dbReference>
<dbReference type="GO" id="GO:0007052">
    <property type="term" value="P:mitotic spindle organization"/>
    <property type="evidence" value="ECO:0000318"/>
    <property type="project" value="GO_Central"/>
</dbReference>
<dbReference type="GO" id="GO:0043066">
    <property type="term" value="P:negative regulation of apoptotic process"/>
    <property type="evidence" value="ECO:0000250"/>
    <property type="project" value="UniProtKB"/>
</dbReference>
<dbReference type="GO" id="GO:0051898">
    <property type="term" value="P:negative regulation of phosphatidylinositol 3-kinase/protein kinase B signal transduction"/>
    <property type="evidence" value="ECO:0000250"/>
    <property type="project" value="UniProtKB"/>
</dbReference>
<dbReference type="GO" id="GO:0000122">
    <property type="term" value="P:negative regulation of transcription by RNA polymerase II"/>
    <property type="evidence" value="ECO:0000250"/>
    <property type="project" value="UniProtKB"/>
</dbReference>
<dbReference type="GO" id="GO:1904716">
    <property type="term" value="P:positive regulation of chaperone-mediated autophagy"/>
    <property type="evidence" value="ECO:0000266"/>
    <property type="project" value="RGD"/>
</dbReference>
<dbReference type="GO" id="GO:0090316">
    <property type="term" value="P:positive regulation of intracellular protein transport"/>
    <property type="evidence" value="ECO:0000250"/>
    <property type="project" value="UniProtKB"/>
</dbReference>
<dbReference type="GO" id="GO:0032436">
    <property type="term" value="P:positive regulation of proteasomal ubiquitin-dependent protein catabolic process"/>
    <property type="evidence" value="ECO:0000250"/>
    <property type="project" value="UniProtKB"/>
</dbReference>
<dbReference type="GO" id="GO:0051302">
    <property type="term" value="P:regulation of cell division"/>
    <property type="evidence" value="ECO:0000250"/>
    <property type="project" value="UniProtKB"/>
</dbReference>
<dbReference type="GO" id="GO:0032465">
    <property type="term" value="P:regulation of cytokinesis"/>
    <property type="evidence" value="ECO:0000266"/>
    <property type="project" value="RGD"/>
</dbReference>
<dbReference type="GO" id="GO:0048169">
    <property type="term" value="P:regulation of long-term neuronal synaptic plasticity"/>
    <property type="evidence" value="ECO:0000303"/>
    <property type="project" value="RGD"/>
</dbReference>
<dbReference type="GO" id="GO:0048167">
    <property type="term" value="P:regulation of synaptic plasticity"/>
    <property type="evidence" value="ECO:0000304"/>
    <property type="project" value="UniProtKB"/>
</dbReference>
<dbReference type="GO" id="GO:0006970">
    <property type="term" value="P:response to osmotic stress"/>
    <property type="evidence" value="ECO:0000250"/>
    <property type="project" value="UniProtKB"/>
</dbReference>
<dbReference type="GO" id="GO:0009314">
    <property type="term" value="P:response to radiation"/>
    <property type="evidence" value="ECO:0000250"/>
    <property type="project" value="UniProtKB"/>
</dbReference>
<dbReference type="GO" id="GO:0000302">
    <property type="term" value="P:response to reactive oxygen species"/>
    <property type="evidence" value="ECO:0000250"/>
    <property type="project" value="UniProtKB"/>
</dbReference>
<dbReference type="CDD" id="cd13118">
    <property type="entry name" value="POLO_box_1"/>
    <property type="match status" value="1"/>
</dbReference>
<dbReference type="CDD" id="cd13117">
    <property type="entry name" value="POLO_box_2"/>
    <property type="match status" value="1"/>
</dbReference>
<dbReference type="CDD" id="cd14189">
    <property type="entry name" value="STKc_PLK3"/>
    <property type="match status" value="1"/>
</dbReference>
<dbReference type="FunFam" id="1.10.510.10:FF:000189">
    <property type="entry name" value="Serine/threonine-protein kinase PLK"/>
    <property type="match status" value="1"/>
</dbReference>
<dbReference type="FunFam" id="3.30.1120.30:FF:000001">
    <property type="entry name" value="Serine/threonine-protein kinase PLK"/>
    <property type="match status" value="1"/>
</dbReference>
<dbReference type="FunFam" id="3.30.200.20:FF:000091">
    <property type="entry name" value="Serine/threonine-protein kinase PLK"/>
    <property type="match status" value="1"/>
</dbReference>
<dbReference type="Gene3D" id="3.30.200.20">
    <property type="entry name" value="Phosphorylase Kinase, domain 1"/>
    <property type="match status" value="1"/>
</dbReference>
<dbReference type="Gene3D" id="3.30.1120.30">
    <property type="entry name" value="POLO box domain"/>
    <property type="match status" value="2"/>
</dbReference>
<dbReference type="Gene3D" id="1.10.510.10">
    <property type="entry name" value="Transferase(Phosphotransferase) domain 1"/>
    <property type="match status" value="1"/>
</dbReference>
<dbReference type="InterPro" id="IPR011009">
    <property type="entry name" value="Kinase-like_dom_sf"/>
</dbReference>
<dbReference type="InterPro" id="IPR042703">
    <property type="entry name" value="PLK3_STKc"/>
</dbReference>
<dbReference type="InterPro" id="IPR033701">
    <property type="entry name" value="POLO_box_1"/>
</dbReference>
<dbReference type="InterPro" id="IPR033695">
    <property type="entry name" value="POLO_box_2"/>
</dbReference>
<dbReference type="InterPro" id="IPR000959">
    <property type="entry name" value="POLO_box_dom"/>
</dbReference>
<dbReference type="InterPro" id="IPR036947">
    <property type="entry name" value="POLO_box_dom_sf"/>
</dbReference>
<dbReference type="InterPro" id="IPR000719">
    <property type="entry name" value="Prot_kinase_dom"/>
</dbReference>
<dbReference type="InterPro" id="IPR017441">
    <property type="entry name" value="Protein_kinase_ATP_BS"/>
</dbReference>
<dbReference type="InterPro" id="IPR008271">
    <property type="entry name" value="Ser/Thr_kinase_AS"/>
</dbReference>
<dbReference type="PANTHER" id="PTHR24345">
    <property type="entry name" value="SERINE/THREONINE-PROTEIN KINASE PLK"/>
    <property type="match status" value="1"/>
</dbReference>
<dbReference type="PANTHER" id="PTHR24345:SF42">
    <property type="entry name" value="SERINE_THREONINE-PROTEIN KINASE PLK3"/>
    <property type="match status" value="1"/>
</dbReference>
<dbReference type="Pfam" id="PF00069">
    <property type="entry name" value="Pkinase"/>
    <property type="match status" value="1"/>
</dbReference>
<dbReference type="Pfam" id="PF00659">
    <property type="entry name" value="POLO_box"/>
    <property type="match status" value="2"/>
</dbReference>
<dbReference type="SMART" id="SM00220">
    <property type="entry name" value="S_TKc"/>
    <property type="match status" value="1"/>
</dbReference>
<dbReference type="SUPFAM" id="SSF82615">
    <property type="entry name" value="Polo-box domain"/>
    <property type="match status" value="2"/>
</dbReference>
<dbReference type="SUPFAM" id="SSF56112">
    <property type="entry name" value="Protein kinase-like (PK-like)"/>
    <property type="match status" value="1"/>
</dbReference>
<dbReference type="PROSITE" id="PS50078">
    <property type="entry name" value="POLO_BOX"/>
    <property type="match status" value="2"/>
</dbReference>
<dbReference type="PROSITE" id="PS00107">
    <property type="entry name" value="PROTEIN_KINASE_ATP"/>
    <property type="match status" value="1"/>
</dbReference>
<dbReference type="PROSITE" id="PS50011">
    <property type="entry name" value="PROTEIN_KINASE_DOM"/>
    <property type="match status" value="1"/>
</dbReference>
<dbReference type="PROSITE" id="PS00108">
    <property type="entry name" value="PROTEIN_KINASE_ST"/>
    <property type="match status" value="1"/>
</dbReference>
<feature type="chain" id="PRO_0000414709" description="Serine/threonine-protein kinase PLK3">
    <location>
        <begin position="1"/>
        <end position="647"/>
    </location>
</feature>
<feature type="domain" description="Protein kinase" evidence="3">
    <location>
        <begin position="62"/>
        <end position="314"/>
    </location>
</feature>
<feature type="domain" description="POLO box 1" evidence="2">
    <location>
        <begin position="464"/>
        <end position="542"/>
    </location>
</feature>
<feature type="domain" description="POLO box 2" evidence="2">
    <location>
        <begin position="563"/>
        <end position="646"/>
    </location>
</feature>
<feature type="region of interest" description="Disordered" evidence="5">
    <location>
        <begin position="1"/>
        <end position="56"/>
    </location>
</feature>
<feature type="compositionally biased region" description="Pro residues" evidence="5">
    <location>
        <begin position="20"/>
        <end position="31"/>
    </location>
</feature>
<feature type="active site" description="Proton acceptor" evidence="3 4">
    <location>
        <position position="185"/>
    </location>
</feature>
<feature type="binding site" evidence="3">
    <location>
        <begin position="68"/>
        <end position="76"/>
    </location>
    <ligand>
        <name>ATP</name>
        <dbReference type="ChEBI" id="CHEBI:30616"/>
    </ligand>
</feature>
<feature type="binding site" evidence="3">
    <location>
        <position position="91"/>
    </location>
    <ligand>
        <name>ATP</name>
        <dbReference type="ChEBI" id="CHEBI:30616"/>
    </ligand>
</feature>
<keyword id="KW-0053">Apoptosis</keyword>
<keyword id="KW-0067">ATP-binding</keyword>
<keyword id="KW-0131">Cell cycle</keyword>
<keyword id="KW-0966">Cell projection</keyword>
<keyword id="KW-0963">Cytoplasm</keyword>
<keyword id="KW-0206">Cytoskeleton</keyword>
<keyword id="KW-0227">DNA damage</keyword>
<keyword id="KW-0333">Golgi apparatus</keyword>
<keyword id="KW-0418">Kinase</keyword>
<keyword id="KW-0547">Nucleotide-binding</keyword>
<keyword id="KW-0539">Nucleus</keyword>
<keyword id="KW-0597">Phosphoprotein</keyword>
<keyword id="KW-1185">Reference proteome</keyword>
<keyword id="KW-0677">Repeat</keyword>
<keyword id="KW-0723">Serine/threonine-protein kinase</keyword>
<keyword id="KW-0808">Transferase</keyword>
<comment type="function">
    <text evidence="1">Serine/threonine-protein kinase involved in cell cycle regulation, response to stress and Golgi disassembly. Polo-like kinases act by binding and phosphorylating proteins that are already phosphorylated on a specific motif recognized by the POLO box domains. Phosphorylates ATF2, BCL2L1, CDC25A, CDC25C, CHEK2, HIF1A, JUN, p53/TP53, p73/TP73, PTEN, TOP2A and VRK1. Involved in cell cycle regulation: required for entry into S phase and cytokinesis. Phosphorylates BCL2L1, leading to regulate the G2 checkpoint and progression to cytokinesis during mitosis. Plays a key role in response to stress: rapidly activated upon stress stimulation, such as ionizing radiation, reactive oxygen species (ROS), hyperosmotic stress, UV irradiation and hypoxia. Involved in DNA damage response and G1/S transition checkpoint by phosphorylating CDC25A, p53/TP53 and p73/TP73. Phosphorylates p53/TP53 in response to reactive oxygen species (ROS), thereby promoting p53/TP53-mediated apoptosis. Phosphorylates CHEK2 in response to DNA damage, promoting the G2/M transition checkpoint. Phosphorylates the transcription factor p73/TP73 in response to DNA damage, leading to inhibit p73/TP73-mediated transcriptional activation and pro-apoptotic functions. Phosphorylates HIF1A and JUN is response to hypoxia. Phosphorylates ATF2 following hyperosmotic stress in corneal epithelium. Also involved in Golgi disassembly during the cell cycle: part of a MEK1/MAP2K1-dependent pathway that induces Golgi fragmentation during mitosis by mediating phosphorylation of VRK1. May participate in endomitotic cell cycle, a form of mitosis in which both karyokinesis and cytokinesis are interrupted and is a hallmark of megakaryocyte differentiation, via its interaction with CIB1 (By similarity).</text>
</comment>
<comment type="catalytic activity">
    <reaction>
        <text>L-seryl-[protein] + ATP = O-phospho-L-seryl-[protein] + ADP + H(+)</text>
        <dbReference type="Rhea" id="RHEA:17989"/>
        <dbReference type="Rhea" id="RHEA-COMP:9863"/>
        <dbReference type="Rhea" id="RHEA-COMP:11604"/>
        <dbReference type="ChEBI" id="CHEBI:15378"/>
        <dbReference type="ChEBI" id="CHEBI:29999"/>
        <dbReference type="ChEBI" id="CHEBI:30616"/>
        <dbReference type="ChEBI" id="CHEBI:83421"/>
        <dbReference type="ChEBI" id="CHEBI:456216"/>
        <dbReference type="EC" id="2.7.11.21"/>
    </reaction>
</comment>
<comment type="catalytic activity">
    <reaction>
        <text>L-threonyl-[protein] + ATP = O-phospho-L-threonyl-[protein] + ADP + H(+)</text>
        <dbReference type="Rhea" id="RHEA:46608"/>
        <dbReference type="Rhea" id="RHEA-COMP:11060"/>
        <dbReference type="Rhea" id="RHEA-COMP:11605"/>
        <dbReference type="ChEBI" id="CHEBI:15378"/>
        <dbReference type="ChEBI" id="CHEBI:30013"/>
        <dbReference type="ChEBI" id="CHEBI:30616"/>
        <dbReference type="ChEBI" id="CHEBI:61977"/>
        <dbReference type="ChEBI" id="CHEBI:456216"/>
        <dbReference type="EC" id="2.7.11.21"/>
    </reaction>
</comment>
<comment type="subunit">
    <text evidence="1 6">Interacts with GOLGB1 (By similarity). Interacts (via the POLO-box domain) with CIB1; leading to inhibit PLK3 kinase activity.</text>
</comment>
<comment type="subcellular location">
    <subcellularLocation>
        <location evidence="6">Cell projection</location>
        <location evidence="6">Dendrite</location>
    </subcellularLocation>
    <subcellularLocation>
        <location evidence="1">Cytoplasm</location>
    </subcellularLocation>
    <subcellularLocation>
        <location evidence="1">Nucleus</location>
    </subcellularLocation>
    <subcellularLocation>
        <location evidence="1">Nucleus</location>
        <location evidence="1">Nucleolus</location>
    </subcellularLocation>
    <subcellularLocation>
        <location evidence="1">Golgi apparatus</location>
    </subcellularLocation>
    <subcellularLocation>
        <location evidence="1">Cytoplasm</location>
        <location evidence="1">Cytoskeleton</location>
        <location evidence="1">Microtubule organizing center</location>
        <location evidence="1">Centrosome</location>
    </subcellularLocation>
    <text evidence="1">Translocates to the nucleus upon cisplatin treatment. Localizes to the Golgi apparatus during interphase (By similarity). When induced, it translocates into the dendrites of activated neurons.</text>
</comment>
<comment type="tissue specificity">
    <text evidence="6">Constitutively expressed in post-mitotic neurons.</text>
</comment>
<comment type="induction">
    <text evidence="6">By the intense activity associated with seizures.</text>
</comment>
<comment type="domain">
    <text evidence="1">The POLO box domains act as phosphopeptide-binding module that recognizes and binds serine-[phosphothreonine/phosphoserine]-(proline/X) motifs. PLK3 recognizes and binds docking proteins that are already phosphorylated on these motifs, and then phosphorylates them. The POLO box domains mediate localization to the centrosome (By similarity).</text>
</comment>
<comment type="PTM">
    <text evidence="1">Phosphorylated in an ATM-dependent manner following DNA damage. Phosphorylated as cells enter mitosis and dephosphorylated as cells exit mitosis (By similarity).</text>
</comment>
<comment type="similarity">
    <text evidence="3">Belongs to the protein kinase superfamily. Ser/Thr protein kinase family. CDC5/Polo subfamily.</text>
</comment>
<organism>
    <name type="scientific">Rattus norvegicus</name>
    <name type="common">Rat</name>
    <dbReference type="NCBI Taxonomy" id="10116"/>
    <lineage>
        <taxon>Eukaryota</taxon>
        <taxon>Metazoa</taxon>
        <taxon>Chordata</taxon>
        <taxon>Craniata</taxon>
        <taxon>Vertebrata</taxon>
        <taxon>Euteleostomi</taxon>
        <taxon>Mammalia</taxon>
        <taxon>Eutheria</taxon>
        <taxon>Euarchontoglires</taxon>
        <taxon>Glires</taxon>
        <taxon>Rodentia</taxon>
        <taxon>Myomorpha</taxon>
        <taxon>Muroidea</taxon>
        <taxon>Muridae</taxon>
        <taxon>Murinae</taxon>
        <taxon>Rattus</taxon>
    </lineage>
</organism>
<evidence type="ECO:0000250" key="1"/>
<evidence type="ECO:0000255" key="2">
    <source>
        <dbReference type="PROSITE-ProRule" id="PRU00154"/>
    </source>
</evidence>
<evidence type="ECO:0000255" key="3">
    <source>
        <dbReference type="PROSITE-ProRule" id="PRU00159"/>
    </source>
</evidence>
<evidence type="ECO:0000255" key="4">
    <source>
        <dbReference type="PROSITE-ProRule" id="PRU10027"/>
    </source>
</evidence>
<evidence type="ECO:0000256" key="5">
    <source>
        <dbReference type="SAM" id="MobiDB-lite"/>
    </source>
</evidence>
<evidence type="ECO:0000269" key="6">
    <source>
    </source>
</evidence>
<accession>Q9R011</accession>
<gene>
    <name type="primary">Plk3</name>
    <name type="synonym">Cnk</name>
    <name type="synonym">Fnk</name>
</gene>
<name>PLK3_RAT</name>
<sequence length="647" mass="71768">MEPAAGFLSPRPFPRAAAPSSPPAGPGPPASASPRSEPGVLAGPQTPDASRLITDPRSGRTYIKGRLLGKGGFARCYEATDTETSIAYAVKVIPQSRVAKPHQREKIINEIELHRDLQHRHIVRFSHHFEDADNIYIFLELCSRKSLAHIWKARHTLLEPEVRYYLRQILSGLKYLHQRGILHRDLKLGNFFITDNMELKVGDFGLAARLEPPEQRKKTICGTPNYVAPEVLLRQGHGPEADVWSLGCVMYTLLCGSPPFETADLKETYRCIKQVHYTLPASLSLPARQLLAAILRASPRDRPSIEQILRHDFFTKGYTPDRLPVSSCVTVPDLTPPNPARSLFAKVTKSLFGRRKSKNKNHSEEQDNVSCLVSGLMRTSIGHPDVRPEAPAASALAPVSLVETAAEDSSPRGTLASSGDGFEEGLTVTTVVESALCALRNCVAFMPPAEQNPAPLAQPEPLVWVSKWVDYSNKFGFGYQLSSRRVAVLFNDGTHMALSANRKTVHYNPTSTKHFSFSVGSVPRALQPQLGILRYFASYMEQHLMKGGDLPSVEEVEVPAPPLLLQWVKTDQALLMLFSDGTVQVNFYGDHTKLILSGWEPLLVTFVARNRSACTYLASHLRQLGCSPDLRQRLRYALRLLRDRSPA</sequence>
<reference key="1">
    <citation type="journal article" date="2004" name="Nature">
        <title>Genome sequence of the Brown Norway rat yields insights into mammalian evolution.</title>
        <authorList>
            <person name="Gibbs R.A."/>
            <person name="Weinstock G.M."/>
            <person name="Metzker M.L."/>
            <person name="Muzny D.M."/>
            <person name="Sodergren E.J."/>
            <person name="Scherer S."/>
            <person name="Scott G."/>
            <person name="Steffen D."/>
            <person name="Worley K.C."/>
            <person name="Burch P.E."/>
            <person name="Okwuonu G."/>
            <person name="Hines S."/>
            <person name="Lewis L."/>
            <person name="Deramo C."/>
            <person name="Delgado O."/>
            <person name="Dugan-Rocha S."/>
            <person name="Miner G."/>
            <person name="Morgan M."/>
            <person name="Hawes A."/>
            <person name="Gill R."/>
            <person name="Holt R.A."/>
            <person name="Adams M.D."/>
            <person name="Amanatides P.G."/>
            <person name="Baden-Tillson H."/>
            <person name="Barnstead M."/>
            <person name="Chin S."/>
            <person name="Evans C.A."/>
            <person name="Ferriera S."/>
            <person name="Fosler C."/>
            <person name="Glodek A."/>
            <person name="Gu Z."/>
            <person name="Jennings D."/>
            <person name="Kraft C.L."/>
            <person name="Nguyen T."/>
            <person name="Pfannkoch C.M."/>
            <person name="Sitter C."/>
            <person name="Sutton G.G."/>
            <person name="Venter J.C."/>
            <person name="Woodage T."/>
            <person name="Smith D."/>
            <person name="Lee H.-M."/>
            <person name="Gustafson E."/>
            <person name="Cahill P."/>
            <person name="Kana A."/>
            <person name="Doucette-Stamm L."/>
            <person name="Weinstock K."/>
            <person name="Fechtel K."/>
            <person name="Weiss R.B."/>
            <person name="Dunn D.M."/>
            <person name="Green E.D."/>
            <person name="Blakesley R.W."/>
            <person name="Bouffard G.G."/>
            <person name="De Jong P.J."/>
            <person name="Osoegawa K."/>
            <person name="Zhu B."/>
            <person name="Marra M."/>
            <person name="Schein J."/>
            <person name="Bosdet I."/>
            <person name="Fjell C."/>
            <person name="Jones S."/>
            <person name="Krzywinski M."/>
            <person name="Mathewson C."/>
            <person name="Siddiqui A."/>
            <person name="Wye N."/>
            <person name="McPherson J."/>
            <person name="Zhao S."/>
            <person name="Fraser C.M."/>
            <person name="Shetty J."/>
            <person name="Shatsman S."/>
            <person name="Geer K."/>
            <person name="Chen Y."/>
            <person name="Abramzon S."/>
            <person name="Nierman W.C."/>
            <person name="Havlak P.H."/>
            <person name="Chen R."/>
            <person name="Durbin K.J."/>
            <person name="Egan A."/>
            <person name="Ren Y."/>
            <person name="Song X.-Z."/>
            <person name="Li B."/>
            <person name="Liu Y."/>
            <person name="Qin X."/>
            <person name="Cawley S."/>
            <person name="Cooney A.J."/>
            <person name="D'Souza L.M."/>
            <person name="Martin K."/>
            <person name="Wu J.Q."/>
            <person name="Gonzalez-Garay M.L."/>
            <person name="Jackson A.R."/>
            <person name="Kalafus K.J."/>
            <person name="McLeod M.P."/>
            <person name="Milosavljevic A."/>
            <person name="Virk D."/>
            <person name="Volkov A."/>
            <person name="Wheeler D.A."/>
            <person name="Zhang Z."/>
            <person name="Bailey J.A."/>
            <person name="Eichler E.E."/>
            <person name="Tuzun E."/>
            <person name="Birney E."/>
            <person name="Mongin E."/>
            <person name="Ureta-Vidal A."/>
            <person name="Woodwark C."/>
            <person name="Zdobnov E."/>
            <person name="Bork P."/>
            <person name="Suyama M."/>
            <person name="Torrents D."/>
            <person name="Alexandersson M."/>
            <person name="Trask B.J."/>
            <person name="Young J.M."/>
            <person name="Huang H."/>
            <person name="Wang H."/>
            <person name="Xing H."/>
            <person name="Daniels S."/>
            <person name="Gietzen D."/>
            <person name="Schmidt J."/>
            <person name="Stevens K."/>
            <person name="Vitt U."/>
            <person name="Wingrove J."/>
            <person name="Camara F."/>
            <person name="Mar Alba M."/>
            <person name="Abril J.F."/>
            <person name="Guigo R."/>
            <person name="Smit A."/>
            <person name="Dubchak I."/>
            <person name="Rubin E.M."/>
            <person name="Couronne O."/>
            <person name="Poliakov A."/>
            <person name="Huebner N."/>
            <person name="Ganten D."/>
            <person name="Goesele C."/>
            <person name="Hummel O."/>
            <person name="Kreitler T."/>
            <person name="Lee Y.-A."/>
            <person name="Monti J."/>
            <person name="Schulz H."/>
            <person name="Zimdahl H."/>
            <person name="Himmelbauer H."/>
            <person name="Lehrach H."/>
            <person name="Jacob H.J."/>
            <person name="Bromberg S."/>
            <person name="Gullings-Handley J."/>
            <person name="Jensen-Seaman M.I."/>
            <person name="Kwitek A.E."/>
            <person name="Lazar J."/>
            <person name="Pasko D."/>
            <person name="Tonellato P.J."/>
            <person name="Twigger S."/>
            <person name="Ponting C.P."/>
            <person name="Duarte J.M."/>
            <person name="Rice S."/>
            <person name="Goodstadt L."/>
            <person name="Beatson S.A."/>
            <person name="Emes R.D."/>
            <person name="Winter E.E."/>
            <person name="Webber C."/>
            <person name="Brandt P."/>
            <person name="Nyakatura G."/>
            <person name="Adetobi M."/>
            <person name="Chiaromonte F."/>
            <person name="Elnitski L."/>
            <person name="Eswara P."/>
            <person name="Hardison R.C."/>
            <person name="Hou M."/>
            <person name="Kolbe D."/>
            <person name="Makova K."/>
            <person name="Miller W."/>
            <person name="Nekrutenko A."/>
            <person name="Riemer C."/>
            <person name="Schwartz S."/>
            <person name="Taylor J."/>
            <person name="Yang S."/>
            <person name="Zhang Y."/>
            <person name="Lindpaintner K."/>
            <person name="Andrews T.D."/>
            <person name="Caccamo M."/>
            <person name="Clamp M."/>
            <person name="Clarke L."/>
            <person name="Curwen V."/>
            <person name="Durbin R.M."/>
            <person name="Eyras E."/>
            <person name="Searle S.M."/>
            <person name="Cooper G.M."/>
            <person name="Batzoglou S."/>
            <person name="Brudno M."/>
            <person name="Sidow A."/>
            <person name="Stone E.A."/>
            <person name="Payseur B.A."/>
            <person name="Bourque G."/>
            <person name="Lopez-Otin C."/>
            <person name="Puente X.S."/>
            <person name="Chakrabarti K."/>
            <person name="Chatterji S."/>
            <person name="Dewey C."/>
            <person name="Pachter L."/>
            <person name="Bray N."/>
            <person name="Yap V.B."/>
            <person name="Caspi A."/>
            <person name="Tesler G."/>
            <person name="Pevzner P.A."/>
            <person name="Haussler D."/>
            <person name="Roskin K.M."/>
            <person name="Baertsch R."/>
            <person name="Clawson H."/>
            <person name="Furey T.S."/>
            <person name="Hinrichs A.S."/>
            <person name="Karolchik D."/>
            <person name="Kent W.J."/>
            <person name="Rosenbloom K.R."/>
            <person name="Trumbower H."/>
            <person name="Weirauch M."/>
            <person name="Cooper D.N."/>
            <person name="Stenson P.D."/>
            <person name="Ma B."/>
            <person name="Brent M."/>
            <person name="Arumugam M."/>
            <person name="Shteynberg D."/>
            <person name="Copley R.R."/>
            <person name="Taylor M.S."/>
            <person name="Riethman H."/>
            <person name="Mudunuri U."/>
            <person name="Peterson J."/>
            <person name="Guyer M."/>
            <person name="Felsenfeld A."/>
            <person name="Old S."/>
            <person name="Mockrin S."/>
            <person name="Collins F.S."/>
        </authorList>
    </citation>
    <scope>NUCLEOTIDE SEQUENCE [LARGE SCALE GENOMIC DNA]</scope>
    <source>
        <strain>Brown Norway</strain>
    </source>
</reference>
<reference key="2">
    <citation type="journal article" date="1999" name="EMBO J.">
        <title>The polo-like protein kinases Fnk and Snk associate with a Ca(2+)- and integrin-binding protein and are regulated dynamically with synaptic plasticity.</title>
        <authorList>
            <person name="Kauselmann G."/>
            <person name="Weiler M."/>
            <person name="Wulff P."/>
            <person name="Jessberger S."/>
            <person name="Konietzko U."/>
            <person name="Scafidi J."/>
            <person name="Staubli U."/>
            <person name="Bereiter-Hahn J."/>
            <person name="Strebhardt K."/>
            <person name="Kuhl D."/>
        </authorList>
    </citation>
    <scope>NUCLEOTIDE SEQUENCE [MRNA]</scope>
    <scope>INTERACTION WITH CIB1</scope>
    <scope>TISSUE SPECIFICITY</scope>
    <scope>INDUCTION</scope>
    <scope>SUBCELLULAR LOCATION</scope>
</reference>
<proteinExistence type="evidence at protein level"/>